<evidence type="ECO:0000250" key="1"/>
<evidence type="ECO:0000255" key="2">
    <source>
        <dbReference type="PROSITE-ProRule" id="PRU10035"/>
    </source>
</evidence>
<evidence type="ECO:0000255" key="3">
    <source>
        <dbReference type="PROSITE-ProRule" id="PRU10036"/>
    </source>
</evidence>
<evidence type="ECO:0000269" key="4">
    <source>
    </source>
</evidence>
<evidence type="ECO:0000305" key="5"/>
<feature type="chain" id="PRO_0000161681" description="Acidic phospholipase A2 PA-1G">
    <location>
        <begin position="1"/>
        <end position="117"/>
    </location>
</feature>
<feature type="active site" evidence="1">
    <location>
        <position position="48"/>
    </location>
</feature>
<feature type="active site" evidence="1">
    <location>
        <position position="92"/>
    </location>
</feature>
<feature type="binding site" evidence="1">
    <location>
        <position position="28"/>
    </location>
    <ligand>
        <name>Ca(2+)</name>
        <dbReference type="ChEBI" id="CHEBI:29108"/>
    </ligand>
</feature>
<feature type="binding site" evidence="1">
    <location>
        <position position="30"/>
    </location>
    <ligand>
        <name>Ca(2+)</name>
        <dbReference type="ChEBI" id="CHEBI:29108"/>
    </ligand>
</feature>
<feature type="binding site" evidence="1">
    <location>
        <position position="32"/>
    </location>
    <ligand>
        <name>Ca(2+)</name>
        <dbReference type="ChEBI" id="CHEBI:29108"/>
    </ligand>
</feature>
<feature type="binding site" evidence="1">
    <location>
        <position position="49"/>
    </location>
    <ligand>
        <name>Ca(2+)</name>
        <dbReference type="ChEBI" id="CHEBI:29108"/>
    </ligand>
</feature>
<feature type="disulfide bond" evidence="1">
    <location>
        <begin position="11"/>
        <end position="71"/>
    </location>
</feature>
<feature type="disulfide bond" evidence="1">
    <location>
        <begin position="27"/>
        <end position="117"/>
    </location>
</feature>
<feature type="disulfide bond" evidence="1">
    <location>
        <begin position="29"/>
        <end position="45"/>
    </location>
</feature>
<feature type="disulfide bond" evidence="1">
    <location>
        <begin position="44"/>
        <end position="98"/>
    </location>
</feature>
<feature type="disulfide bond" evidence="1">
    <location>
        <begin position="51"/>
        <end position="91"/>
    </location>
</feature>
<feature type="disulfide bond" evidence="1">
    <location>
        <begin position="60"/>
        <end position="84"/>
    </location>
</feature>
<feature type="disulfide bond" evidence="1">
    <location>
        <begin position="78"/>
        <end position="89"/>
    </location>
</feature>
<feature type="sequence variant">
    <original>T</original>
    <variation>A</variation>
    <location>
        <position position="103"/>
    </location>
</feature>
<dbReference type="EC" id="3.1.1.4"/>
<dbReference type="PIR" id="A34860">
    <property type="entry name" value="A34860"/>
</dbReference>
<dbReference type="SMR" id="P20250"/>
<dbReference type="GO" id="GO:0005576">
    <property type="term" value="C:extracellular region"/>
    <property type="evidence" value="ECO:0007669"/>
    <property type="project" value="UniProtKB-SubCell"/>
</dbReference>
<dbReference type="GO" id="GO:0005509">
    <property type="term" value="F:calcium ion binding"/>
    <property type="evidence" value="ECO:0007669"/>
    <property type="project" value="InterPro"/>
</dbReference>
<dbReference type="GO" id="GO:0047498">
    <property type="term" value="F:calcium-dependent phospholipase A2 activity"/>
    <property type="evidence" value="ECO:0007669"/>
    <property type="project" value="TreeGrafter"/>
</dbReference>
<dbReference type="GO" id="GO:0005543">
    <property type="term" value="F:phospholipid binding"/>
    <property type="evidence" value="ECO:0007669"/>
    <property type="project" value="TreeGrafter"/>
</dbReference>
<dbReference type="GO" id="GO:0050482">
    <property type="term" value="P:arachidonate secretion"/>
    <property type="evidence" value="ECO:0007669"/>
    <property type="project" value="InterPro"/>
</dbReference>
<dbReference type="GO" id="GO:0016042">
    <property type="term" value="P:lipid catabolic process"/>
    <property type="evidence" value="ECO:0007669"/>
    <property type="project" value="UniProtKB-KW"/>
</dbReference>
<dbReference type="GO" id="GO:0006644">
    <property type="term" value="P:phospholipid metabolic process"/>
    <property type="evidence" value="ECO:0007669"/>
    <property type="project" value="InterPro"/>
</dbReference>
<dbReference type="CDD" id="cd00125">
    <property type="entry name" value="PLA2c"/>
    <property type="match status" value="1"/>
</dbReference>
<dbReference type="FunFam" id="1.20.90.10:FF:000007">
    <property type="entry name" value="Acidic phospholipase A2"/>
    <property type="match status" value="1"/>
</dbReference>
<dbReference type="Gene3D" id="1.20.90.10">
    <property type="entry name" value="Phospholipase A2 domain"/>
    <property type="match status" value="1"/>
</dbReference>
<dbReference type="InterPro" id="IPR001211">
    <property type="entry name" value="PLipase_A2"/>
</dbReference>
<dbReference type="InterPro" id="IPR033112">
    <property type="entry name" value="PLipase_A2_Asp_AS"/>
</dbReference>
<dbReference type="InterPro" id="IPR016090">
    <property type="entry name" value="PLipase_A2_dom"/>
</dbReference>
<dbReference type="InterPro" id="IPR036444">
    <property type="entry name" value="PLipase_A2_dom_sf"/>
</dbReference>
<dbReference type="InterPro" id="IPR033113">
    <property type="entry name" value="PLipase_A2_His_AS"/>
</dbReference>
<dbReference type="PANTHER" id="PTHR11716:SF51">
    <property type="entry name" value="PHOSPHOLIPASE A2"/>
    <property type="match status" value="1"/>
</dbReference>
<dbReference type="PANTHER" id="PTHR11716">
    <property type="entry name" value="PHOSPHOLIPASE A2 FAMILY MEMBER"/>
    <property type="match status" value="1"/>
</dbReference>
<dbReference type="Pfam" id="PF00068">
    <property type="entry name" value="Phospholip_A2_1"/>
    <property type="match status" value="1"/>
</dbReference>
<dbReference type="PRINTS" id="PR00389">
    <property type="entry name" value="PHPHLIPASEA2"/>
</dbReference>
<dbReference type="SMART" id="SM00085">
    <property type="entry name" value="PA2c"/>
    <property type="match status" value="1"/>
</dbReference>
<dbReference type="SUPFAM" id="SSF48619">
    <property type="entry name" value="Phospholipase A2, PLA2"/>
    <property type="match status" value="1"/>
</dbReference>
<dbReference type="PROSITE" id="PS00119">
    <property type="entry name" value="PA2_ASP"/>
    <property type="match status" value="1"/>
</dbReference>
<dbReference type="PROSITE" id="PS00118">
    <property type="entry name" value="PA2_HIS"/>
    <property type="match status" value="1"/>
</dbReference>
<keyword id="KW-0106">Calcium</keyword>
<keyword id="KW-0903">Direct protein sequencing</keyword>
<keyword id="KW-1015">Disulfide bond</keyword>
<keyword id="KW-0378">Hydrolase</keyword>
<keyword id="KW-0442">Lipid degradation</keyword>
<keyword id="KW-0443">Lipid metabolism</keyword>
<keyword id="KW-0479">Metal-binding</keyword>
<keyword id="KW-0964">Secreted</keyword>
<sequence>NLIQFGNMIQCANKGSRPTRHYMDYGCYCGWGGSGTPVDELDRCCQTHDDCYGEAEKKGCYPKLTLYSWDCTGNVPICSPKAECKDFVCACDAEAAKCFAKATYNDANWNIDTKTRC</sequence>
<name>PA2A_PSEAU</name>
<comment type="function">
    <text>PLA2 catalyzes the calcium-dependent hydrolysis of the 2-acyl groups in 3-sn-phosphoglycerides.</text>
</comment>
<comment type="catalytic activity">
    <reaction evidence="2 3">
        <text>a 1,2-diacyl-sn-glycero-3-phosphocholine + H2O = a 1-acyl-sn-glycero-3-phosphocholine + a fatty acid + H(+)</text>
        <dbReference type="Rhea" id="RHEA:15801"/>
        <dbReference type="ChEBI" id="CHEBI:15377"/>
        <dbReference type="ChEBI" id="CHEBI:15378"/>
        <dbReference type="ChEBI" id="CHEBI:28868"/>
        <dbReference type="ChEBI" id="CHEBI:57643"/>
        <dbReference type="ChEBI" id="CHEBI:58168"/>
        <dbReference type="EC" id="3.1.1.4"/>
    </reaction>
</comment>
<comment type="cofactor">
    <cofactor evidence="1">
        <name>Ca(2+)</name>
        <dbReference type="ChEBI" id="CHEBI:29108"/>
    </cofactor>
    <text evidence="1">Binds 1 Ca(2+) ion.</text>
</comment>
<comment type="subcellular location">
    <subcellularLocation>
        <location>Secreted</location>
    </subcellularLocation>
</comment>
<comment type="tissue specificity">
    <text>Expressed by the venom gland.</text>
</comment>
<comment type="toxic dose">
    <text evidence="4">LD(50) is 0.13 mg/kg by intravenous injection.</text>
</comment>
<comment type="similarity">
    <text evidence="5">Belongs to the phospholipase A2 family. Group I subfamily. D49 sub-subfamily.</text>
</comment>
<accession>P20250</accession>
<reference key="1">
    <citation type="journal article" date="1990" name="Toxicon">
        <title>Amino acid sequences of eight phospholipases A2 from the venom of Australian king brown snake, Pseudechis australis.</title>
        <authorList>
            <person name="Takasaki C."/>
            <person name="Yutani F."/>
            <person name="Kajiyashiki T."/>
        </authorList>
    </citation>
    <scope>PROTEIN SEQUENCE</scope>
    <scope>TOXIC DOSE</scope>
    <source>
        <tissue>Venom</tissue>
    </source>
</reference>
<proteinExistence type="evidence at protein level"/>
<organism>
    <name type="scientific">Pseudechis australis</name>
    <name type="common">Mulga snake</name>
    <name type="synonym">King brown snake</name>
    <dbReference type="NCBI Taxonomy" id="8670"/>
    <lineage>
        <taxon>Eukaryota</taxon>
        <taxon>Metazoa</taxon>
        <taxon>Chordata</taxon>
        <taxon>Craniata</taxon>
        <taxon>Vertebrata</taxon>
        <taxon>Euteleostomi</taxon>
        <taxon>Lepidosauria</taxon>
        <taxon>Squamata</taxon>
        <taxon>Bifurcata</taxon>
        <taxon>Unidentata</taxon>
        <taxon>Episquamata</taxon>
        <taxon>Toxicofera</taxon>
        <taxon>Serpentes</taxon>
        <taxon>Colubroidea</taxon>
        <taxon>Elapidae</taxon>
        <taxon>Hydrophiinae</taxon>
        <taxon>Pseudechis</taxon>
    </lineage>
</organism>
<protein>
    <recommendedName>
        <fullName>Acidic phospholipase A2 PA-1G</fullName>
        <shortName>svPLA2</shortName>
        <ecNumber>3.1.1.4</ecNumber>
    </recommendedName>
    <alternativeName>
        <fullName>Phosphatidylcholine 2-acylhydrolase</fullName>
    </alternativeName>
</protein>